<protein>
    <recommendedName>
        <fullName evidence="1">Phosphoribosyl-AMP cyclohydrolase</fullName>
        <shortName evidence="1">PRA-CH</shortName>
        <ecNumber evidence="1">3.5.4.19</ecNumber>
    </recommendedName>
</protein>
<accession>B7JFZ6</accession>
<feature type="chain" id="PRO_1000135330" description="Phosphoribosyl-AMP cyclohydrolase">
    <location>
        <begin position="1"/>
        <end position="101"/>
    </location>
</feature>
<feature type="binding site" evidence="1">
    <location>
        <position position="71"/>
    </location>
    <ligand>
        <name>Mg(2+)</name>
        <dbReference type="ChEBI" id="CHEBI:18420"/>
    </ligand>
</feature>
<feature type="binding site" evidence="1">
    <location>
        <position position="72"/>
    </location>
    <ligand>
        <name>Zn(2+)</name>
        <dbReference type="ChEBI" id="CHEBI:29105"/>
        <note>ligand shared between dimeric partners</note>
    </ligand>
</feature>
<feature type="binding site" evidence="1">
    <location>
        <position position="73"/>
    </location>
    <ligand>
        <name>Mg(2+)</name>
        <dbReference type="ChEBI" id="CHEBI:18420"/>
    </ligand>
</feature>
<feature type="binding site" evidence="1">
    <location>
        <position position="75"/>
    </location>
    <ligand>
        <name>Mg(2+)</name>
        <dbReference type="ChEBI" id="CHEBI:18420"/>
    </ligand>
</feature>
<feature type="binding site" evidence="1">
    <location>
        <position position="88"/>
    </location>
    <ligand>
        <name>Zn(2+)</name>
        <dbReference type="ChEBI" id="CHEBI:29105"/>
        <note>ligand shared between dimeric partners</note>
    </ligand>
</feature>
<feature type="binding site" evidence="1">
    <location>
        <position position="95"/>
    </location>
    <ligand>
        <name>Zn(2+)</name>
        <dbReference type="ChEBI" id="CHEBI:29105"/>
        <note>ligand shared between dimeric partners</note>
    </ligand>
</feature>
<keyword id="KW-0028">Amino-acid biosynthesis</keyword>
<keyword id="KW-0963">Cytoplasm</keyword>
<keyword id="KW-0368">Histidine biosynthesis</keyword>
<keyword id="KW-0378">Hydrolase</keyword>
<keyword id="KW-0460">Magnesium</keyword>
<keyword id="KW-0479">Metal-binding</keyword>
<keyword id="KW-0862">Zinc</keyword>
<evidence type="ECO:0000255" key="1">
    <source>
        <dbReference type="HAMAP-Rule" id="MF_01021"/>
    </source>
</evidence>
<name>HIS3_BACC0</name>
<dbReference type="EC" id="3.5.4.19" evidence="1"/>
<dbReference type="EMBL" id="CP001283">
    <property type="protein sequence ID" value="ACK92476.1"/>
    <property type="molecule type" value="Genomic_DNA"/>
</dbReference>
<dbReference type="RefSeq" id="WP_000803978.1">
    <property type="nucleotide sequence ID" value="NC_011773.1"/>
</dbReference>
<dbReference type="SMR" id="B7JFZ6"/>
<dbReference type="GeneID" id="45021410"/>
<dbReference type="KEGG" id="bcu:BCAH820_1502"/>
<dbReference type="HOGENOM" id="CLU_048577_5_3_9"/>
<dbReference type="UniPathway" id="UPA00031">
    <property type="reaction ID" value="UER00008"/>
</dbReference>
<dbReference type="Proteomes" id="UP000001363">
    <property type="component" value="Chromosome"/>
</dbReference>
<dbReference type="GO" id="GO:0005737">
    <property type="term" value="C:cytoplasm"/>
    <property type="evidence" value="ECO:0007669"/>
    <property type="project" value="UniProtKB-SubCell"/>
</dbReference>
<dbReference type="GO" id="GO:0000287">
    <property type="term" value="F:magnesium ion binding"/>
    <property type="evidence" value="ECO:0007669"/>
    <property type="project" value="UniProtKB-UniRule"/>
</dbReference>
<dbReference type="GO" id="GO:0004635">
    <property type="term" value="F:phosphoribosyl-AMP cyclohydrolase activity"/>
    <property type="evidence" value="ECO:0007669"/>
    <property type="project" value="UniProtKB-UniRule"/>
</dbReference>
<dbReference type="GO" id="GO:0008270">
    <property type="term" value="F:zinc ion binding"/>
    <property type="evidence" value="ECO:0007669"/>
    <property type="project" value="UniProtKB-UniRule"/>
</dbReference>
<dbReference type="GO" id="GO:0000105">
    <property type="term" value="P:L-histidine biosynthetic process"/>
    <property type="evidence" value="ECO:0007669"/>
    <property type="project" value="UniProtKB-UniRule"/>
</dbReference>
<dbReference type="FunFam" id="3.10.20.810:FF:000001">
    <property type="entry name" value="Histidine biosynthesis bifunctional protein HisIE"/>
    <property type="match status" value="1"/>
</dbReference>
<dbReference type="Gene3D" id="3.10.20.810">
    <property type="entry name" value="Phosphoribosyl-AMP cyclohydrolase"/>
    <property type="match status" value="1"/>
</dbReference>
<dbReference type="HAMAP" id="MF_01021">
    <property type="entry name" value="HisI"/>
    <property type="match status" value="1"/>
</dbReference>
<dbReference type="InterPro" id="IPR026660">
    <property type="entry name" value="PRA-CH"/>
</dbReference>
<dbReference type="InterPro" id="IPR002496">
    <property type="entry name" value="PRib_AMP_CycHydrolase_dom"/>
</dbReference>
<dbReference type="InterPro" id="IPR038019">
    <property type="entry name" value="PRib_AMP_CycHydrolase_sf"/>
</dbReference>
<dbReference type="NCBIfam" id="NF000768">
    <property type="entry name" value="PRK00051.1"/>
    <property type="match status" value="1"/>
</dbReference>
<dbReference type="PANTHER" id="PTHR42945">
    <property type="entry name" value="HISTIDINE BIOSYNTHESIS BIFUNCTIONAL PROTEIN"/>
    <property type="match status" value="1"/>
</dbReference>
<dbReference type="PANTHER" id="PTHR42945:SF1">
    <property type="entry name" value="HISTIDINE BIOSYNTHESIS BIFUNCTIONAL PROTEIN HIS7"/>
    <property type="match status" value="1"/>
</dbReference>
<dbReference type="Pfam" id="PF01502">
    <property type="entry name" value="PRA-CH"/>
    <property type="match status" value="1"/>
</dbReference>
<dbReference type="SUPFAM" id="SSF141734">
    <property type="entry name" value="HisI-like"/>
    <property type="match status" value="1"/>
</dbReference>
<proteinExistence type="inferred from homology"/>
<gene>
    <name evidence="1" type="primary">hisI</name>
    <name type="ordered locus">BCAH820_1502</name>
</gene>
<organism>
    <name type="scientific">Bacillus cereus (strain AH820)</name>
    <dbReference type="NCBI Taxonomy" id="405535"/>
    <lineage>
        <taxon>Bacteria</taxon>
        <taxon>Bacillati</taxon>
        <taxon>Bacillota</taxon>
        <taxon>Bacilli</taxon>
        <taxon>Bacillales</taxon>
        <taxon>Bacillaceae</taxon>
        <taxon>Bacillus</taxon>
        <taxon>Bacillus cereus group</taxon>
    </lineage>
</organism>
<comment type="function">
    <text evidence="1">Catalyzes the hydrolysis of the adenine ring of phosphoribosyl-AMP.</text>
</comment>
<comment type="catalytic activity">
    <reaction evidence="1">
        <text>1-(5-phospho-beta-D-ribosyl)-5'-AMP + H2O = 1-(5-phospho-beta-D-ribosyl)-5-[(5-phospho-beta-D-ribosylamino)methylideneamino]imidazole-4-carboxamide</text>
        <dbReference type="Rhea" id="RHEA:20049"/>
        <dbReference type="ChEBI" id="CHEBI:15377"/>
        <dbReference type="ChEBI" id="CHEBI:58435"/>
        <dbReference type="ChEBI" id="CHEBI:59457"/>
        <dbReference type="EC" id="3.5.4.19"/>
    </reaction>
</comment>
<comment type="cofactor">
    <cofactor evidence="1">
        <name>Mg(2+)</name>
        <dbReference type="ChEBI" id="CHEBI:18420"/>
    </cofactor>
    <text evidence="1">Binds 1 Mg(2+) ion per subunit.</text>
</comment>
<comment type="cofactor">
    <cofactor evidence="1">
        <name>Zn(2+)</name>
        <dbReference type="ChEBI" id="CHEBI:29105"/>
    </cofactor>
    <text evidence="1">Binds 1 zinc ion per subunit.</text>
</comment>
<comment type="pathway">
    <text evidence="1">Amino-acid biosynthesis; L-histidine biosynthesis; L-histidine from 5-phospho-alpha-D-ribose 1-diphosphate: step 3/9.</text>
</comment>
<comment type="subunit">
    <text evidence="1">Homodimer.</text>
</comment>
<comment type="subcellular location">
    <subcellularLocation>
        <location evidence="1">Cytoplasm</location>
    </subcellularLocation>
</comment>
<comment type="similarity">
    <text evidence="1">Belongs to the PRA-CH family.</text>
</comment>
<sequence>MKPNFSKGLLPAVVIEEGTKEVLMLAYMNEEAYEKTLKTKRTWFYSRSRRSLWNKGETSGHVQHVQSLYLDCDQDAIVVFVKQVGPACHTGEKTCFHYKII</sequence>
<reference key="1">
    <citation type="submission" date="2008-10" db="EMBL/GenBank/DDBJ databases">
        <title>Genome sequence of Bacillus cereus AH820.</title>
        <authorList>
            <person name="Dodson R.J."/>
            <person name="Durkin A.S."/>
            <person name="Rosovitz M.J."/>
            <person name="Rasko D.A."/>
            <person name="Hoffmaster A."/>
            <person name="Ravel J."/>
            <person name="Sutton G."/>
        </authorList>
    </citation>
    <scope>NUCLEOTIDE SEQUENCE [LARGE SCALE GENOMIC DNA]</scope>
    <source>
        <strain>AH820</strain>
    </source>
</reference>